<keyword id="KW-1003">Cell membrane</keyword>
<keyword id="KW-0134">Cell wall</keyword>
<keyword id="KW-0961">Cell wall biogenesis/degradation</keyword>
<keyword id="KW-0325">Glycoprotein</keyword>
<keyword id="KW-0336">GPI-anchor</keyword>
<keyword id="KW-0449">Lipoprotein</keyword>
<keyword id="KW-0472">Membrane</keyword>
<keyword id="KW-1185">Reference proteome</keyword>
<keyword id="KW-0964">Secreted</keyword>
<keyword id="KW-0732">Signal</keyword>
<protein>
    <recommendedName>
        <fullName evidence="6">Cell surface GPI-anchored protein ARB_01627</fullName>
    </recommendedName>
</protein>
<sequence>MAITKYLVSALAVAGLAFAKDCAGDLTIENQQDVSTLSSCEKWDGDIVISEVVKSSISLTGVKQITGSLKAKNSSITELSAPNLNSIGDALSLSTCTALRSLDLSSLTKVKTLSLEALPKLQALGFTRTVSQATSILITNTDLTSLQGLDLETVGDFMVTNNPHLMEINVNKMTNITGYLNFAANNKQLSVKFPNLEGAHNMTFRNVSDASLPSLHKMDGLLGFYSNFFMNISAPNLTATGDLVFTSNSAVMNISMPKLETVKGGLQLANNSLLEDIEGFPALKLITGALDITGKFKTVKLPSLKEVRGDANLQSTETFGCDPWQKLKDSDVIRGKLTCRERQEKPKTGDDHSGGDEEGHKGAAAAFAKAPAAALLIAFVGALQFFL</sequence>
<feature type="signal peptide" evidence="2">
    <location>
        <begin position="1"/>
        <end position="19"/>
    </location>
</feature>
<feature type="chain" id="PRO_0000434928" description="Cell surface GPI-anchored protein ARB_01627">
    <location>
        <begin position="20"/>
        <end position="364"/>
    </location>
</feature>
<feature type="propeptide" id="PRO_0000434929" description="Removed in mature form" evidence="2">
    <location>
        <begin position="365"/>
        <end position="387"/>
    </location>
</feature>
<feature type="region of interest" description="Disordered" evidence="4">
    <location>
        <begin position="338"/>
        <end position="362"/>
    </location>
</feature>
<feature type="compositionally biased region" description="Basic and acidic residues" evidence="4">
    <location>
        <begin position="338"/>
        <end position="361"/>
    </location>
</feature>
<feature type="lipid moiety-binding region" description="GPI-anchor amidated alanine" evidence="2">
    <location>
        <position position="364"/>
    </location>
</feature>
<feature type="glycosylation site" description="N-linked (GlcNAc...) asparagine" evidence="3">
    <location>
        <position position="73"/>
    </location>
</feature>
<feature type="glycosylation site" description="N-linked (GlcNAc...) asparagine" evidence="3">
    <location>
        <position position="175"/>
    </location>
</feature>
<feature type="glycosylation site" description="N-linked (GlcNAc...) asparagine" evidence="3">
    <location>
        <position position="201"/>
    </location>
</feature>
<feature type="glycosylation site" description="N-linked (GlcNAc...) asparagine" evidence="3">
    <location>
        <position position="206"/>
    </location>
</feature>
<feature type="glycosylation site" description="N-linked (GlcNAc...) asparagine" evidence="3">
    <location>
        <position position="231"/>
    </location>
</feature>
<feature type="glycosylation site" description="N-linked (GlcNAc...) asparagine" evidence="3">
    <location>
        <position position="236"/>
    </location>
</feature>
<feature type="glycosylation site" description="N-linked (GlcNAc...) asparagine" evidence="3">
    <location>
        <position position="253"/>
    </location>
</feature>
<feature type="glycosylation site" description="N-linked (GlcNAc...) asparagine" evidence="3">
    <location>
        <position position="270"/>
    </location>
</feature>
<dbReference type="EMBL" id="ABSU01000021">
    <property type="protein sequence ID" value="EFE31479.1"/>
    <property type="molecule type" value="Genomic_DNA"/>
</dbReference>
<dbReference type="RefSeq" id="XP_003012119.1">
    <property type="nucleotide sequence ID" value="XM_003012073.1"/>
</dbReference>
<dbReference type="SMR" id="D4AZK9"/>
<dbReference type="STRING" id="663331.D4AZK9"/>
<dbReference type="GeneID" id="9519687"/>
<dbReference type="KEGG" id="abe:ARB_01627"/>
<dbReference type="eggNOG" id="ENOG502QUZC">
    <property type="taxonomic scope" value="Eukaryota"/>
</dbReference>
<dbReference type="HOGENOM" id="CLU_035846_0_1_1"/>
<dbReference type="OMA" id="WANNITF"/>
<dbReference type="OrthoDB" id="536881at2759"/>
<dbReference type="Proteomes" id="UP000008866">
    <property type="component" value="Unassembled WGS sequence"/>
</dbReference>
<dbReference type="GO" id="GO:0009986">
    <property type="term" value="C:cell surface"/>
    <property type="evidence" value="ECO:0007669"/>
    <property type="project" value="TreeGrafter"/>
</dbReference>
<dbReference type="GO" id="GO:0005576">
    <property type="term" value="C:extracellular region"/>
    <property type="evidence" value="ECO:0007669"/>
    <property type="project" value="UniProtKB-SubCell"/>
</dbReference>
<dbReference type="GO" id="GO:0009277">
    <property type="term" value="C:fungal-type cell wall"/>
    <property type="evidence" value="ECO:0007669"/>
    <property type="project" value="TreeGrafter"/>
</dbReference>
<dbReference type="GO" id="GO:0005886">
    <property type="term" value="C:plasma membrane"/>
    <property type="evidence" value="ECO:0007669"/>
    <property type="project" value="UniProtKB-SubCell"/>
</dbReference>
<dbReference type="GO" id="GO:0098552">
    <property type="term" value="C:side of membrane"/>
    <property type="evidence" value="ECO:0007669"/>
    <property type="project" value="UniProtKB-KW"/>
</dbReference>
<dbReference type="GO" id="GO:0031505">
    <property type="term" value="P:fungal-type cell wall organization"/>
    <property type="evidence" value="ECO:0007669"/>
    <property type="project" value="TreeGrafter"/>
</dbReference>
<dbReference type="Gene3D" id="3.80.10.10">
    <property type="entry name" value="Ribonuclease Inhibitor"/>
    <property type="match status" value="1"/>
</dbReference>
<dbReference type="InterPro" id="IPR051648">
    <property type="entry name" value="CWI-Assembly_Regulator"/>
</dbReference>
<dbReference type="InterPro" id="IPR032675">
    <property type="entry name" value="LRR_dom_sf"/>
</dbReference>
<dbReference type="PANTHER" id="PTHR31018:SF3">
    <property type="entry name" value="RECEPTOR PROTEIN-TYROSINE KINASE"/>
    <property type="match status" value="1"/>
</dbReference>
<dbReference type="PANTHER" id="PTHR31018">
    <property type="entry name" value="SPORULATION-SPECIFIC PROTEIN-RELATED"/>
    <property type="match status" value="1"/>
</dbReference>
<dbReference type="Pfam" id="PF12454">
    <property type="entry name" value="Ecm33"/>
    <property type="match status" value="1"/>
</dbReference>
<dbReference type="SUPFAM" id="SSF52058">
    <property type="entry name" value="L domain-like"/>
    <property type="match status" value="2"/>
</dbReference>
<accession>D4AZK9</accession>
<organism>
    <name type="scientific">Arthroderma benhamiae (strain ATCC MYA-4681 / CBS 112371)</name>
    <name type="common">Trichophyton mentagrophytes</name>
    <dbReference type="NCBI Taxonomy" id="663331"/>
    <lineage>
        <taxon>Eukaryota</taxon>
        <taxon>Fungi</taxon>
        <taxon>Dikarya</taxon>
        <taxon>Ascomycota</taxon>
        <taxon>Pezizomycotina</taxon>
        <taxon>Eurotiomycetes</taxon>
        <taxon>Eurotiomycetidae</taxon>
        <taxon>Onygenales</taxon>
        <taxon>Arthrodermataceae</taxon>
        <taxon>Trichophyton</taxon>
    </lineage>
</organism>
<proteinExistence type="evidence at protein level"/>
<name>ECM33_ARTBC</name>
<evidence type="ECO:0000250" key="1">
    <source>
        <dbReference type="UniProtKB" id="P38248"/>
    </source>
</evidence>
<evidence type="ECO:0000255" key="2"/>
<evidence type="ECO:0000255" key="3">
    <source>
        <dbReference type="PROSITE-ProRule" id="PRU00498"/>
    </source>
</evidence>
<evidence type="ECO:0000256" key="4">
    <source>
        <dbReference type="SAM" id="MobiDB-lite"/>
    </source>
</evidence>
<evidence type="ECO:0000269" key="5">
    <source>
    </source>
</evidence>
<evidence type="ECO:0000305" key="6"/>
<gene>
    <name type="ORF">ARB_01627</name>
</gene>
<comment type="function">
    <text evidence="1">Required for proper cell wall integrity and for the correct assembly of the mannoprotein outer layer of the cell wall.</text>
</comment>
<comment type="subcellular location">
    <subcellularLocation>
        <location evidence="1">Cell membrane</location>
        <topology evidence="1">Lipid-anchor</topology>
        <topology evidence="1">GPI-anchor</topology>
    </subcellularLocation>
    <subcellularLocation>
        <location evidence="5">Secreted</location>
    </subcellularLocation>
    <subcellularLocation>
        <location evidence="1">Secreted</location>
        <location evidence="1">Cell wall</location>
    </subcellularLocation>
    <text evidence="1">Identified as GPI-anchored plasma membrane protein (GPI-PMP) as well as covalently-linked GPI-modified cell wall protein (GPI-CWP) in the outer cell wall layer.</text>
</comment>
<comment type="PTM">
    <text evidence="6">The GPI-anchor is attached to the protein in the endoplasmic reticulum and serves to target the protein to the cell surface. There, the glucosamine-inositol phospholipid moiety is cleaved off and the GPI-modified mannoprotein is covalently attached via its lipidless GPI glycan remnant to the 1,6-beta-glucan of the outer cell wall layer.</text>
</comment>
<comment type="similarity">
    <text evidence="6">Belongs to the SPS2 family.</text>
</comment>
<reference key="1">
    <citation type="journal article" date="2011" name="Genome Biol.">
        <title>Comparative and functional genomics provide insights into the pathogenicity of dermatophytic fungi.</title>
        <authorList>
            <person name="Burmester A."/>
            <person name="Shelest E."/>
            <person name="Gloeckner G."/>
            <person name="Heddergott C."/>
            <person name="Schindler S."/>
            <person name="Staib P."/>
            <person name="Heidel A."/>
            <person name="Felder M."/>
            <person name="Petzold A."/>
            <person name="Szafranski K."/>
            <person name="Feuermann M."/>
            <person name="Pedruzzi I."/>
            <person name="Priebe S."/>
            <person name="Groth M."/>
            <person name="Winkler R."/>
            <person name="Li W."/>
            <person name="Kniemeyer O."/>
            <person name="Schroeckh V."/>
            <person name="Hertweck C."/>
            <person name="Hube B."/>
            <person name="White T.C."/>
            <person name="Platzer M."/>
            <person name="Guthke R."/>
            <person name="Heitman J."/>
            <person name="Woestemeyer J."/>
            <person name="Zipfel P.F."/>
            <person name="Monod M."/>
            <person name="Brakhage A.A."/>
        </authorList>
    </citation>
    <scope>NUCLEOTIDE SEQUENCE [LARGE SCALE GENOMIC DNA]</scope>
    <source>
        <strain>ATCC MYA-4681 / CBS 112371</strain>
    </source>
</reference>
<reference key="2">
    <citation type="journal article" date="2011" name="Proteomics">
        <title>Identification of novel secreted proteases during extracellular proteolysis by dermatophytes at acidic pH.</title>
        <authorList>
            <person name="Sriranganadane D."/>
            <person name="Waridel P."/>
            <person name="Salamin K."/>
            <person name="Feuermann M."/>
            <person name="Mignon B."/>
            <person name="Staib P."/>
            <person name="Neuhaus J.M."/>
            <person name="Quadroni M."/>
            <person name="Monod M."/>
        </authorList>
    </citation>
    <scope>IDENTIFICATION BY MASS SPECTROMETRY</scope>
    <scope>SUBCELLULAR LOCATION</scope>
</reference>